<keyword id="KW-0456">Lyase</keyword>
<keyword id="KW-0460">Magnesium</keyword>
<keyword id="KW-0479">Metal-binding</keyword>
<organism>
    <name type="scientific">Postia placenta (strain ATCC 44394 / Madison 698-R)</name>
    <name type="common">Brown rot fungus</name>
    <name type="synonym">Poria monticola</name>
    <dbReference type="NCBI Taxonomy" id="561896"/>
    <lineage>
        <taxon>Eukaryota</taxon>
        <taxon>Fungi</taxon>
        <taxon>Dikarya</taxon>
        <taxon>Basidiomycota</taxon>
        <taxon>Agaricomycotina</taxon>
        <taxon>Agaricomycetes</taxon>
        <taxon>Polyporales</taxon>
        <taxon>Adustoporiaceae</taxon>
        <taxon>Rhodonia</taxon>
    </lineage>
</organism>
<proteinExistence type="evidence at protein level"/>
<evidence type="ECO:0000250" key="1">
    <source>
        <dbReference type="UniProtKB" id="B5HDJ6"/>
    </source>
</evidence>
<evidence type="ECO:0000250" key="2">
    <source>
        <dbReference type="UniProtKB" id="I3ZNU9"/>
    </source>
</evidence>
<evidence type="ECO:0000250" key="3">
    <source>
        <dbReference type="UniProtKB" id="Q9UR08"/>
    </source>
</evidence>
<evidence type="ECO:0000269" key="4">
    <source>
    </source>
</evidence>
<evidence type="ECO:0000303" key="5">
    <source>
    </source>
</evidence>
<evidence type="ECO:0000305" key="6"/>
<evidence type="ECO:0000305" key="7">
    <source>
    </source>
</evidence>
<name>STS8_POSPM</name>
<feature type="chain" id="PRO_0000451390" description="Delta(6)-protoilludene synthase 8">
    <location>
        <begin position="1"/>
        <end position="342"/>
    </location>
</feature>
<feature type="short sequence motif" description="DDXXD motif" evidence="7">
    <location>
        <begin position="93"/>
        <end position="97"/>
    </location>
</feature>
<feature type="short sequence motif" description="NSE/DTE motif" evidence="7">
    <location>
        <begin position="217"/>
        <end position="225"/>
    </location>
</feature>
<feature type="binding site" evidence="3">
    <location>
        <position position="81"/>
    </location>
    <ligand>
        <name>Mg(2+)</name>
        <dbReference type="ChEBI" id="CHEBI:18420"/>
        <label>1</label>
    </ligand>
</feature>
<feature type="binding site" evidence="3">
    <location>
        <position position="81"/>
    </location>
    <ligand>
        <name>Mg(2+)</name>
        <dbReference type="ChEBI" id="CHEBI:18420"/>
        <label>2</label>
    </ligand>
</feature>
<feature type="binding site" evidence="3">
    <location>
        <position position="217"/>
    </location>
    <ligand>
        <name>Mg(2+)</name>
        <dbReference type="ChEBI" id="CHEBI:18420"/>
        <label>3</label>
    </ligand>
</feature>
<feature type="binding site" evidence="3">
    <location>
        <position position="221"/>
    </location>
    <ligand>
        <name>Mg(2+)</name>
        <dbReference type="ChEBI" id="CHEBI:18420"/>
        <label>3</label>
    </ligand>
</feature>
<feature type="binding site" evidence="3">
    <location>
        <position position="225"/>
    </location>
    <ligand>
        <name>Mg(2+)</name>
        <dbReference type="ChEBI" id="CHEBI:18420"/>
        <label>3</label>
    </ligand>
</feature>
<feature type="binding site" evidence="3">
    <location>
        <position position="305"/>
    </location>
    <ligand>
        <name>(2E,6E)-farnesyl diphosphate</name>
        <dbReference type="ChEBI" id="CHEBI:175763"/>
    </ligand>
</feature>
<feature type="binding site" evidence="3">
    <location>
        <position position="306"/>
    </location>
    <ligand>
        <name>(2E,6E)-farnesyl diphosphate</name>
        <dbReference type="ChEBI" id="CHEBI:175763"/>
    </ligand>
</feature>
<feature type="site" description="Plays a critical role in the stabilization of intermediate cation" evidence="1">
    <location>
        <position position="78"/>
    </location>
</feature>
<comment type="function">
    <text evidence="4">Terpene cyclase that catalyzes the cyclization of farnesyl diphosphate (FPP) to delta(6)-protoilludene.</text>
</comment>
<comment type="catalytic activity">
    <reaction evidence="4">
        <text>(2E,6E)-farnesyl diphosphate = Delta(6)-protoilludene + diphosphate</text>
        <dbReference type="Rhea" id="RHEA:34695"/>
        <dbReference type="ChEBI" id="CHEBI:33019"/>
        <dbReference type="ChEBI" id="CHEBI:68655"/>
        <dbReference type="ChEBI" id="CHEBI:175763"/>
        <dbReference type="EC" id="4.2.3.135"/>
    </reaction>
    <physiologicalReaction direction="left-to-right" evidence="4">
        <dbReference type="Rhea" id="RHEA:34696"/>
    </physiologicalReaction>
</comment>
<comment type="cofactor">
    <cofactor evidence="2">
        <name>Mg(2+)</name>
        <dbReference type="ChEBI" id="CHEBI:18420"/>
    </cofactor>
</comment>
<comment type="domain">
    <text evidence="7">The conserved DDXXD and NSE/DTE motifs are important for the catalytic activity, presumably through binding to Mg(2+).</text>
</comment>
<comment type="similarity">
    <text evidence="6">Belongs to the terpene synthase family.</text>
</comment>
<gene>
    <name evidence="5" type="primary">STS-08</name>
</gene>
<sequence length="342" mass="39418">MLYLPDTMSAWPWQRAINPYFNEVKAASNSWFKSFRAFSPASQKAFDKCDFCLLAALAYPRARKEHLRTGCDLMNLFFVIDEYTDVEDANVCRDMVDIVIDALRRPHDPRPEGEVVLGEIARQFWARAIETASPTSQRRFLETFIAYLESVVLQAADRDCDAEHTVQTYLAQRRDNIGSYPSYAVLELALDIPDDIFYHPAMNELSLYATEMLIIDNDLVSYNREQASGDTNNILFVIMRQFNCSLDHAMAWAAAYHSQLEARFMDAFKRMPSWGLEIDSQVEEYCQGIANWPRGNDCWSFESGRYFGDKGREVQKTRCVPLLPKKERDTSLRQQDVVITSL</sequence>
<protein>
    <recommendedName>
        <fullName evidence="5">Delta(6)-protoilludene synthase 8</fullName>
        <ecNumber evidence="4">4.2.3.135</ecNumber>
    </recommendedName>
    <alternativeName>
        <fullName evidence="5">Terpene cyclase 8</fullName>
    </alternativeName>
</protein>
<accession>A0A348B784</accession>
<reference key="1">
    <citation type="journal article" date="2018" name="Microb. Biotechnol.">
        <title>Insight into metabolic diversity of the brown-rot basidiomycete Postia placenta responsible for sesquiterpene biosynthesis: semi-comprehensive screening of cytochrome P450 monooxygenase involved in protoilludene metabolism.</title>
        <authorList>
            <person name="Ichinose H."/>
            <person name="Kitaoka T."/>
        </authorList>
    </citation>
    <scope>NUCLEOTIDE SEQUENCE [MRNA]</scope>
    <scope>FUNCTION</scope>
    <scope>DOMAIN</scope>
    <scope>CATALYTIC ACTIVITY</scope>
    <source>
        <strain>ATCC 44394 / Madison 698-R</strain>
    </source>
</reference>
<dbReference type="EC" id="4.2.3.135" evidence="4"/>
<dbReference type="EMBL" id="LC378430">
    <property type="protein sequence ID" value="BBD74522.1"/>
    <property type="molecule type" value="mRNA"/>
</dbReference>
<dbReference type="SMR" id="A0A348B784"/>
<dbReference type="GO" id="GO:0046872">
    <property type="term" value="F:metal ion binding"/>
    <property type="evidence" value="ECO:0007669"/>
    <property type="project" value="UniProtKB-KW"/>
</dbReference>
<dbReference type="GO" id="GO:0010333">
    <property type="term" value="F:terpene synthase activity"/>
    <property type="evidence" value="ECO:0007669"/>
    <property type="project" value="InterPro"/>
</dbReference>
<dbReference type="GO" id="GO:0008299">
    <property type="term" value="P:isoprenoid biosynthetic process"/>
    <property type="evidence" value="ECO:0007669"/>
    <property type="project" value="UniProtKB-ARBA"/>
</dbReference>
<dbReference type="Gene3D" id="1.10.600.10">
    <property type="entry name" value="Farnesyl Diphosphate Synthase"/>
    <property type="match status" value="1"/>
</dbReference>
<dbReference type="InterPro" id="IPR008949">
    <property type="entry name" value="Isoprenoid_synthase_dom_sf"/>
</dbReference>
<dbReference type="InterPro" id="IPR034686">
    <property type="entry name" value="Terpene_cyclase-like_2"/>
</dbReference>
<dbReference type="PANTHER" id="PTHR35201:SF4">
    <property type="entry name" value="BETA-PINACENE SYNTHASE-RELATED"/>
    <property type="match status" value="1"/>
</dbReference>
<dbReference type="PANTHER" id="PTHR35201">
    <property type="entry name" value="TERPENE SYNTHASE"/>
    <property type="match status" value="1"/>
</dbReference>
<dbReference type="Pfam" id="PF19086">
    <property type="entry name" value="Terpene_syn_C_2"/>
    <property type="match status" value="1"/>
</dbReference>
<dbReference type="SFLD" id="SFLDS00005">
    <property type="entry name" value="Isoprenoid_Synthase_Type_I"/>
    <property type="match status" value="1"/>
</dbReference>
<dbReference type="SFLD" id="SFLDG01020">
    <property type="entry name" value="Terpene_Cyclase_Like_2"/>
    <property type="match status" value="1"/>
</dbReference>
<dbReference type="SUPFAM" id="SSF48576">
    <property type="entry name" value="Terpenoid synthases"/>
    <property type="match status" value="1"/>
</dbReference>